<feature type="chain" id="PRO_0000164558" description="D-aminoacyl-tRNA deacylase">
    <location>
        <begin position="1"/>
        <end position="144"/>
    </location>
</feature>
<feature type="short sequence motif" description="Gly-cisPro motif, important for rejection of L-amino acids" evidence="1">
    <location>
        <begin position="136"/>
        <end position="137"/>
    </location>
</feature>
<evidence type="ECO:0000255" key="1">
    <source>
        <dbReference type="HAMAP-Rule" id="MF_00518"/>
    </source>
</evidence>
<reference key="1">
    <citation type="journal article" date="2004" name="Nat. Biotechnol.">
        <title>The genome sequence of the capnophilic rumen bacterium Mannheimia succiniciproducens.</title>
        <authorList>
            <person name="Hong S.H."/>
            <person name="Kim J.S."/>
            <person name="Lee S.Y."/>
            <person name="In Y.H."/>
            <person name="Choi S.S."/>
            <person name="Rih J.-K."/>
            <person name="Kim C.H."/>
            <person name="Jeong H."/>
            <person name="Hur C.G."/>
            <person name="Kim J.J."/>
        </authorList>
    </citation>
    <scope>NUCLEOTIDE SEQUENCE [LARGE SCALE GENOMIC DNA]</scope>
    <source>
        <strain>KCTC 0769BP / MBEL55E</strain>
    </source>
</reference>
<sequence length="144" mass="15832">MIALIQRVSQAKVDVNGQTVGQIGGGLLVLLGVEKEDSKEKADKLAEKVLNYRIFGDKNDKMNLNVQQTDGELLVVSQFTLAADTGRGLRPSFSKGAPPQLANELYQYFVQKCGEKVRVETGKFAENMQVSLTNDGPVTFWLKV</sequence>
<dbReference type="EC" id="3.1.1.96" evidence="1"/>
<dbReference type="EMBL" id="AE016827">
    <property type="protein sequence ID" value="AAU36638.1"/>
    <property type="molecule type" value="Genomic_DNA"/>
</dbReference>
<dbReference type="RefSeq" id="WP_011199215.1">
    <property type="nucleotide sequence ID" value="NC_006300.1"/>
</dbReference>
<dbReference type="SMR" id="Q65WM2"/>
<dbReference type="STRING" id="221988.MS0031"/>
<dbReference type="KEGG" id="msu:MS0031"/>
<dbReference type="eggNOG" id="COG1490">
    <property type="taxonomic scope" value="Bacteria"/>
</dbReference>
<dbReference type="HOGENOM" id="CLU_076901_1_1_6"/>
<dbReference type="OrthoDB" id="9801395at2"/>
<dbReference type="Proteomes" id="UP000000607">
    <property type="component" value="Chromosome"/>
</dbReference>
<dbReference type="GO" id="GO:0005737">
    <property type="term" value="C:cytoplasm"/>
    <property type="evidence" value="ECO:0007669"/>
    <property type="project" value="UniProtKB-SubCell"/>
</dbReference>
<dbReference type="GO" id="GO:0051500">
    <property type="term" value="F:D-tyrosyl-tRNA(Tyr) deacylase activity"/>
    <property type="evidence" value="ECO:0007669"/>
    <property type="project" value="TreeGrafter"/>
</dbReference>
<dbReference type="GO" id="GO:0106026">
    <property type="term" value="F:Gly-tRNA(Ala) deacylase activity"/>
    <property type="evidence" value="ECO:0007669"/>
    <property type="project" value="UniProtKB-UniRule"/>
</dbReference>
<dbReference type="GO" id="GO:0043908">
    <property type="term" value="F:Ser(Gly)-tRNA(Ala) hydrolase activity"/>
    <property type="evidence" value="ECO:0007669"/>
    <property type="project" value="UniProtKB-UniRule"/>
</dbReference>
<dbReference type="GO" id="GO:0000049">
    <property type="term" value="F:tRNA binding"/>
    <property type="evidence" value="ECO:0007669"/>
    <property type="project" value="UniProtKB-UniRule"/>
</dbReference>
<dbReference type="GO" id="GO:0019478">
    <property type="term" value="P:D-amino acid catabolic process"/>
    <property type="evidence" value="ECO:0007669"/>
    <property type="project" value="UniProtKB-UniRule"/>
</dbReference>
<dbReference type="FunFam" id="3.50.80.10:FF:000001">
    <property type="entry name" value="D-aminoacyl-tRNA deacylase"/>
    <property type="match status" value="1"/>
</dbReference>
<dbReference type="Gene3D" id="3.50.80.10">
    <property type="entry name" value="D-tyrosyl-tRNA(Tyr) deacylase"/>
    <property type="match status" value="1"/>
</dbReference>
<dbReference type="HAMAP" id="MF_00518">
    <property type="entry name" value="Deacylase_Dtd"/>
    <property type="match status" value="1"/>
</dbReference>
<dbReference type="InterPro" id="IPR003732">
    <property type="entry name" value="Daa-tRNA_deacyls_DTD"/>
</dbReference>
<dbReference type="InterPro" id="IPR023509">
    <property type="entry name" value="DTD-like_sf"/>
</dbReference>
<dbReference type="NCBIfam" id="TIGR00256">
    <property type="entry name" value="D-aminoacyl-tRNA deacylase"/>
    <property type="match status" value="1"/>
</dbReference>
<dbReference type="PANTHER" id="PTHR10472:SF5">
    <property type="entry name" value="D-AMINOACYL-TRNA DEACYLASE 1"/>
    <property type="match status" value="1"/>
</dbReference>
<dbReference type="PANTHER" id="PTHR10472">
    <property type="entry name" value="D-TYROSYL-TRNA TYR DEACYLASE"/>
    <property type="match status" value="1"/>
</dbReference>
<dbReference type="Pfam" id="PF02580">
    <property type="entry name" value="Tyr_Deacylase"/>
    <property type="match status" value="1"/>
</dbReference>
<dbReference type="SUPFAM" id="SSF69500">
    <property type="entry name" value="DTD-like"/>
    <property type="match status" value="1"/>
</dbReference>
<organism>
    <name type="scientific">Mannheimia succiniciproducens (strain KCTC 0769BP / MBEL55E)</name>
    <dbReference type="NCBI Taxonomy" id="221988"/>
    <lineage>
        <taxon>Bacteria</taxon>
        <taxon>Pseudomonadati</taxon>
        <taxon>Pseudomonadota</taxon>
        <taxon>Gammaproteobacteria</taxon>
        <taxon>Pasteurellales</taxon>
        <taxon>Pasteurellaceae</taxon>
        <taxon>Basfia</taxon>
    </lineage>
</organism>
<comment type="function">
    <text evidence="1">An aminoacyl-tRNA editing enzyme that deacylates mischarged D-aminoacyl-tRNAs. Also deacylates mischarged glycyl-tRNA(Ala), protecting cells against glycine mischarging by AlaRS. Acts via tRNA-based rather than protein-based catalysis; rejects L-amino acids rather than detecting D-amino acids in the active site. By recycling D-aminoacyl-tRNA to D-amino acids and free tRNA molecules, this enzyme counteracts the toxicity associated with the formation of D-aminoacyl-tRNA entities in vivo and helps enforce protein L-homochirality.</text>
</comment>
<comment type="catalytic activity">
    <reaction evidence="1">
        <text>glycyl-tRNA(Ala) + H2O = tRNA(Ala) + glycine + H(+)</text>
        <dbReference type="Rhea" id="RHEA:53744"/>
        <dbReference type="Rhea" id="RHEA-COMP:9657"/>
        <dbReference type="Rhea" id="RHEA-COMP:13640"/>
        <dbReference type="ChEBI" id="CHEBI:15377"/>
        <dbReference type="ChEBI" id="CHEBI:15378"/>
        <dbReference type="ChEBI" id="CHEBI:57305"/>
        <dbReference type="ChEBI" id="CHEBI:78442"/>
        <dbReference type="ChEBI" id="CHEBI:78522"/>
        <dbReference type="EC" id="3.1.1.96"/>
    </reaction>
</comment>
<comment type="catalytic activity">
    <reaction evidence="1">
        <text>a D-aminoacyl-tRNA + H2O = a tRNA + a D-alpha-amino acid + H(+)</text>
        <dbReference type="Rhea" id="RHEA:13953"/>
        <dbReference type="Rhea" id="RHEA-COMP:10123"/>
        <dbReference type="Rhea" id="RHEA-COMP:10124"/>
        <dbReference type="ChEBI" id="CHEBI:15377"/>
        <dbReference type="ChEBI" id="CHEBI:15378"/>
        <dbReference type="ChEBI" id="CHEBI:59871"/>
        <dbReference type="ChEBI" id="CHEBI:78442"/>
        <dbReference type="ChEBI" id="CHEBI:79333"/>
        <dbReference type="EC" id="3.1.1.96"/>
    </reaction>
</comment>
<comment type="subunit">
    <text evidence="1">Homodimer.</text>
</comment>
<comment type="subcellular location">
    <subcellularLocation>
        <location evidence="1">Cytoplasm</location>
    </subcellularLocation>
</comment>
<comment type="domain">
    <text evidence="1">A Gly-cisPro motif from one monomer fits into the active site of the other monomer to allow specific chiral rejection of L-amino acids.</text>
</comment>
<comment type="similarity">
    <text evidence="1">Belongs to the DTD family.</text>
</comment>
<protein>
    <recommendedName>
        <fullName evidence="1">D-aminoacyl-tRNA deacylase</fullName>
        <shortName evidence="1">DTD</shortName>
        <ecNumber evidence="1">3.1.1.96</ecNumber>
    </recommendedName>
    <alternativeName>
        <fullName evidence="1">Gly-tRNA(Ala) deacylase</fullName>
    </alternativeName>
</protein>
<proteinExistence type="inferred from homology"/>
<accession>Q65WM2</accession>
<gene>
    <name evidence="1" type="primary">dtd</name>
    <name type="ordered locus">MS0031</name>
</gene>
<name>DTD_MANSM</name>
<keyword id="KW-0963">Cytoplasm</keyword>
<keyword id="KW-0378">Hydrolase</keyword>
<keyword id="KW-0694">RNA-binding</keyword>
<keyword id="KW-0820">tRNA-binding</keyword>